<reference key="1">
    <citation type="submission" date="2005-08" db="EMBL/GenBank/DDBJ databases">
        <title>Identification of nerve growth factor as a ubiquitous component of Australian elapid snake venoms.</title>
        <authorList>
            <person name="Earl S.T.H."/>
            <person name="St Pierre L."/>
            <person name="Birrell G.W."/>
            <person name="Wallis T.P."/>
            <person name="Masci P.P."/>
            <person name="de Jersey J."/>
            <person name="Gorman J.J."/>
            <person name="Lavin M.F."/>
        </authorList>
    </citation>
    <scope>NUCLEOTIDE SEQUENCE [MRNA]</scope>
    <source>
        <tissue>Venom gland</tissue>
    </source>
</reference>
<keyword id="KW-0165">Cleavage on pair of basic residues</keyword>
<keyword id="KW-1015">Disulfide bond</keyword>
<keyword id="KW-0339">Growth factor</keyword>
<keyword id="KW-0446">Lipid-binding</keyword>
<keyword id="KW-0481">Metalloenzyme inhibitor</keyword>
<keyword id="KW-0483">Metalloprotease inhibitor</keyword>
<keyword id="KW-0646">Protease inhibitor</keyword>
<keyword id="KW-0964">Secreted</keyword>
<keyword id="KW-0732">Signal</keyword>
<keyword id="KW-0800">Toxin</keyword>
<organism>
    <name type="scientific">Pseudechis australis</name>
    <name type="common">Mulga snake</name>
    <name type="synonym">King brown snake</name>
    <dbReference type="NCBI Taxonomy" id="8670"/>
    <lineage>
        <taxon>Eukaryota</taxon>
        <taxon>Metazoa</taxon>
        <taxon>Chordata</taxon>
        <taxon>Craniata</taxon>
        <taxon>Vertebrata</taxon>
        <taxon>Euteleostomi</taxon>
        <taxon>Lepidosauria</taxon>
        <taxon>Squamata</taxon>
        <taxon>Bifurcata</taxon>
        <taxon>Unidentata</taxon>
        <taxon>Episquamata</taxon>
        <taxon>Toxicofera</taxon>
        <taxon>Serpentes</taxon>
        <taxon>Colubroidea</taxon>
        <taxon>Elapidae</taxon>
        <taxon>Hydrophiinae</taxon>
        <taxon>Pseudechis</taxon>
    </lineage>
</organism>
<proteinExistence type="evidence at transcript level"/>
<feature type="signal peptide" evidence="4">
    <location>
        <begin position="1"/>
        <end position="18"/>
    </location>
</feature>
<feature type="propeptide" id="PRO_0000043308" evidence="1">
    <location>
        <begin position="19"/>
        <end position="125"/>
    </location>
</feature>
<feature type="chain" id="PRO_0000043309" description="Venom nerve growth factor 3">
    <location>
        <begin position="126"/>
        <end position="242"/>
    </location>
</feature>
<feature type="region of interest" description="Disordered" evidence="5">
    <location>
        <begin position="45"/>
        <end position="69"/>
    </location>
</feature>
<feature type="compositionally biased region" description="Basic and acidic residues" evidence="5">
    <location>
        <begin position="46"/>
        <end position="66"/>
    </location>
</feature>
<feature type="disulfide bond" evidence="2">
    <location>
        <begin position="139"/>
        <end position="203"/>
    </location>
</feature>
<feature type="disulfide bond" evidence="2">
    <location>
        <begin position="181"/>
        <end position="231"/>
    </location>
</feature>
<feature type="disulfide bond" evidence="2">
    <location>
        <begin position="191"/>
        <end position="233"/>
    </location>
</feature>
<comment type="function">
    <text evidence="2 3">Nerve growth factor is important for the development and maintenance of the sympathetic and sensory nervous systems. It stimulates division and differentiation of sympathetic and embryonic sensory neurons as well as basal forebrain cholinergic neurons in the brain. Its relevance in the snake venom is not clear. However, it has been shown to inhibit metalloproteinase-dependent proteolysis of platelet glycoprotein Ib alpha, suggesting a metalloproteinase inhibition to prevent metalloprotease autodigestion and/or protection against prey proteases (By similarity). Binds a lipid between the two protein chains in the homodimer. The lipid-bound form promotes histamine relase from mouse mast cells, contrary to the lipid-free form (By similarity).</text>
</comment>
<comment type="subunit">
    <text evidence="2">Homodimer; non-covalently linked.</text>
</comment>
<comment type="subcellular location">
    <subcellularLocation>
        <location evidence="2">Secreted</location>
    </subcellularLocation>
</comment>
<comment type="tissue specificity">
    <text>Expressed by the venom gland.</text>
</comment>
<comment type="similarity">
    <text evidence="6">Belongs to the NGF-beta family.</text>
</comment>
<name>NGFV3_PSEAU</name>
<dbReference type="EMBL" id="DQ181914">
    <property type="protein sequence ID" value="ABA60126.1"/>
    <property type="molecule type" value="mRNA"/>
</dbReference>
<dbReference type="SMR" id="Q3HXY1"/>
<dbReference type="GO" id="GO:0030424">
    <property type="term" value="C:axon"/>
    <property type="evidence" value="ECO:0007669"/>
    <property type="project" value="TreeGrafter"/>
</dbReference>
<dbReference type="GO" id="GO:0030425">
    <property type="term" value="C:dendrite"/>
    <property type="evidence" value="ECO:0007669"/>
    <property type="project" value="TreeGrafter"/>
</dbReference>
<dbReference type="GO" id="GO:0005615">
    <property type="term" value="C:extracellular space"/>
    <property type="evidence" value="ECO:0007669"/>
    <property type="project" value="TreeGrafter"/>
</dbReference>
<dbReference type="GO" id="GO:0008021">
    <property type="term" value="C:synaptic vesicle"/>
    <property type="evidence" value="ECO:0007669"/>
    <property type="project" value="TreeGrafter"/>
</dbReference>
<dbReference type="GO" id="GO:0008083">
    <property type="term" value="F:growth factor activity"/>
    <property type="evidence" value="ECO:0007669"/>
    <property type="project" value="UniProtKB-KW"/>
</dbReference>
<dbReference type="GO" id="GO:0008289">
    <property type="term" value="F:lipid binding"/>
    <property type="evidence" value="ECO:0007669"/>
    <property type="project" value="UniProtKB-KW"/>
</dbReference>
<dbReference type="GO" id="GO:0008191">
    <property type="term" value="F:metalloendopeptidase inhibitor activity"/>
    <property type="evidence" value="ECO:0000250"/>
    <property type="project" value="UniProtKB"/>
</dbReference>
<dbReference type="GO" id="GO:0005163">
    <property type="term" value="F:nerve growth factor receptor binding"/>
    <property type="evidence" value="ECO:0007669"/>
    <property type="project" value="TreeGrafter"/>
</dbReference>
<dbReference type="GO" id="GO:0090729">
    <property type="term" value="F:toxin activity"/>
    <property type="evidence" value="ECO:0007669"/>
    <property type="project" value="UniProtKB-KW"/>
</dbReference>
<dbReference type="GO" id="GO:0007169">
    <property type="term" value="P:cell surface receptor protein tyrosine kinase signaling pathway"/>
    <property type="evidence" value="ECO:0007669"/>
    <property type="project" value="TreeGrafter"/>
</dbReference>
<dbReference type="GO" id="GO:0050804">
    <property type="term" value="P:modulation of chemical synaptic transmission"/>
    <property type="evidence" value="ECO:0007669"/>
    <property type="project" value="TreeGrafter"/>
</dbReference>
<dbReference type="GO" id="GO:0043524">
    <property type="term" value="P:negative regulation of neuron apoptotic process"/>
    <property type="evidence" value="ECO:0007669"/>
    <property type="project" value="TreeGrafter"/>
</dbReference>
<dbReference type="GO" id="GO:0021675">
    <property type="term" value="P:nerve development"/>
    <property type="evidence" value="ECO:0007669"/>
    <property type="project" value="TreeGrafter"/>
</dbReference>
<dbReference type="GO" id="GO:0038180">
    <property type="term" value="P:nerve growth factor signaling pathway"/>
    <property type="evidence" value="ECO:0007669"/>
    <property type="project" value="TreeGrafter"/>
</dbReference>
<dbReference type="GO" id="GO:0048812">
    <property type="term" value="P:neuron projection morphogenesis"/>
    <property type="evidence" value="ECO:0007669"/>
    <property type="project" value="TreeGrafter"/>
</dbReference>
<dbReference type="FunFam" id="2.10.90.10:FF:000002">
    <property type="entry name" value="Brain-derived neurotrophic factor"/>
    <property type="match status" value="1"/>
</dbReference>
<dbReference type="Gene3D" id="2.10.90.10">
    <property type="entry name" value="Cystine-knot cytokines"/>
    <property type="match status" value="1"/>
</dbReference>
<dbReference type="InterPro" id="IPR029034">
    <property type="entry name" value="Cystine-knot_cytokine"/>
</dbReference>
<dbReference type="InterPro" id="IPR020408">
    <property type="entry name" value="Nerve_growth_factor-like"/>
</dbReference>
<dbReference type="InterPro" id="IPR002072">
    <property type="entry name" value="Nerve_growth_factor-rel"/>
</dbReference>
<dbReference type="InterPro" id="IPR020425">
    <property type="entry name" value="Nerve_growth_factor_bsu"/>
</dbReference>
<dbReference type="InterPro" id="IPR019846">
    <property type="entry name" value="Nerve_growth_factor_CS"/>
</dbReference>
<dbReference type="InterPro" id="IPR020433">
    <property type="entry name" value="Venom_nerve_growth_factor"/>
</dbReference>
<dbReference type="PANTHER" id="PTHR11589:SF10">
    <property type="entry name" value="BETA-NERVE GROWTH FACTOR"/>
    <property type="match status" value="1"/>
</dbReference>
<dbReference type="PANTHER" id="PTHR11589">
    <property type="entry name" value="NERVE GROWTH FACTOR NGF -RELATED"/>
    <property type="match status" value="1"/>
</dbReference>
<dbReference type="Pfam" id="PF00243">
    <property type="entry name" value="NGF"/>
    <property type="match status" value="1"/>
</dbReference>
<dbReference type="PIRSF" id="PIRSF001789">
    <property type="entry name" value="NGF"/>
    <property type="match status" value="1"/>
</dbReference>
<dbReference type="PRINTS" id="PR00268">
    <property type="entry name" value="NGF"/>
</dbReference>
<dbReference type="PRINTS" id="PR01913">
    <property type="entry name" value="NGFBETA"/>
</dbReference>
<dbReference type="PRINTS" id="PR01917">
    <property type="entry name" value="VENOMNGF"/>
</dbReference>
<dbReference type="SMART" id="SM00140">
    <property type="entry name" value="NGF"/>
    <property type="match status" value="1"/>
</dbReference>
<dbReference type="SUPFAM" id="SSF57501">
    <property type="entry name" value="Cystine-knot cytokines"/>
    <property type="match status" value="1"/>
</dbReference>
<dbReference type="PROSITE" id="PS00248">
    <property type="entry name" value="NGF_1"/>
    <property type="match status" value="1"/>
</dbReference>
<dbReference type="PROSITE" id="PS50270">
    <property type="entry name" value="NGF_2"/>
    <property type="match status" value="1"/>
</dbReference>
<sequence>MSMLCYTLIIAFLIGIWAAPQSEDNVPLGSPATSDLSDTSCAQTHEGLKTSRNTDQRHPAPKKVDDQEPGSVANIIVDPKLFQKRQFQSSRVLFSTQPPPLSRDEQSVEFLNNEDALNRNIQAKRQNHPVHDLGEHSVCDSISEWVTKTTATDIKGNTVTVEVDVNLNNEVYKQYFFETKCRNPNPVPSGCRGIDSRLWNSYCTTTQTFVKALTMEGNQASWRFIRIDTACVCVITKKTDNL</sequence>
<accession>Q3HXY1</accession>
<evidence type="ECO:0000250" key="1"/>
<evidence type="ECO:0000250" key="2">
    <source>
        <dbReference type="UniProtKB" id="P61898"/>
    </source>
</evidence>
<evidence type="ECO:0000250" key="3">
    <source>
        <dbReference type="UniProtKB" id="P61899"/>
    </source>
</evidence>
<evidence type="ECO:0000255" key="4"/>
<evidence type="ECO:0000256" key="5">
    <source>
        <dbReference type="SAM" id="MobiDB-lite"/>
    </source>
</evidence>
<evidence type="ECO:0000305" key="6"/>
<protein>
    <recommendedName>
        <fullName>Venom nerve growth factor 3</fullName>
        <shortName>v-NGF-3</shortName>
        <shortName>vNGF-3</shortName>
    </recommendedName>
</protein>